<evidence type="ECO:0000255" key="1">
    <source>
        <dbReference type="HAMAP-Rule" id="MF_01118"/>
    </source>
</evidence>
<accession>B7VAB2</accession>
<protein>
    <recommendedName>
        <fullName evidence="1">Uncharacterized MFS-type transporter PLES_33301</fullName>
    </recommendedName>
</protein>
<reference key="1">
    <citation type="journal article" date="2009" name="Genome Res.">
        <title>Newly introduced genomic prophage islands are critical determinants of in vivo competitiveness in the Liverpool epidemic strain of Pseudomonas aeruginosa.</title>
        <authorList>
            <person name="Winstanley C."/>
            <person name="Langille M.G.I."/>
            <person name="Fothergill J.L."/>
            <person name="Kukavica-Ibrulj I."/>
            <person name="Paradis-Bleau C."/>
            <person name="Sanschagrin F."/>
            <person name="Thomson N.R."/>
            <person name="Winsor G.L."/>
            <person name="Quail M.A."/>
            <person name="Lennard N."/>
            <person name="Bignell A."/>
            <person name="Clarke L."/>
            <person name="Seeger K."/>
            <person name="Saunders D."/>
            <person name="Harris D."/>
            <person name="Parkhill J."/>
            <person name="Hancock R.E.W."/>
            <person name="Brinkman F.S.L."/>
            <person name="Levesque R.C."/>
        </authorList>
    </citation>
    <scope>NUCLEOTIDE SEQUENCE [LARGE SCALE GENOMIC DNA]</scope>
    <source>
        <strain>LESB58</strain>
    </source>
</reference>
<organism>
    <name type="scientific">Pseudomonas aeruginosa (strain LESB58)</name>
    <dbReference type="NCBI Taxonomy" id="557722"/>
    <lineage>
        <taxon>Bacteria</taxon>
        <taxon>Pseudomonadati</taxon>
        <taxon>Pseudomonadota</taxon>
        <taxon>Gammaproteobacteria</taxon>
        <taxon>Pseudomonadales</taxon>
        <taxon>Pseudomonadaceae</taxon>
        <taxon>Pseudomonas</taxon>
    </lineage>
</organism>
<gene>
    <name type="ordered locus">PLES_33301</name>
</gene>
<proteinExistence type="inferred from homology"/>
<sequence>MSVDIRPTPPAQDSARQNVTLQIVSVVMFTFIGYLTIGIPLAVLPGYVHDDLGYGSVLAGLVISLQYLATLLARPYAGRVIDGLGPKRAVLYGMAGSAASGLFMLLSVAIQGWPALSLASLLVGRLVLGAAESLVGSAAIGWGIGRVGAPHTAKVISWNGIASYGAIALGAPLGVLLVQWLGLWSMGASIVLLGALGFALAWPKLPAPLVHGERLPFHHVLGRVTPHGMGLALGAIGFGTIATFITLYYASRGWANAVLCLSAFGGCFIGARLLFANSINRLGGFRVAIICLGVESLGLLLLWSAPNPWVGLAGAALTGFGFSLVFPAFGVEAVNLVPASNRGAALGAYSLFVDLSLGITGPLVGFVANLFGFRSMFLFACLASLGGLALAVALHRRSRRPG</sequence>
<feature type="chain" id="PRO_1000137234" description="Uncharacterized MFS-type transporter PLES_33301">
    <location>
        <begin position="1"/>
        <end position="402"/>
    </location>
</feature>
<feature type="transmembrane region" description="Helical" evidence="1">
    <location>
        <begin position="23"/>
        <end position="43"/>
    </location>
</feature>
<feature type="transmembrane region" description="Helical" evidence="1">
    <location>
        <begin position="52"/>
        <end position="72"/>
    </location>
</feature>
<feature type="transmembrane region" description="Helical" evidence="1">
    <location>
        <begin position="90"/>
        <end position="110"/>
    </location>
</feature>
<feature type="transmembrane region" description="Helical" evidence="1">
    <location>
        <begin position="121"/>
        <end position="141"/>
    </location>
</feature>
<feature type="transmembrane region" description="Helical" evidence="1">
    <location>
        <begin position="158"/>
        <end position="178"/>
    </location>
</feature>
<feature type="transmembrane region" description="Helical" evidence="1">
    <location>
        <begin position="180"/>
        <end position="200"/>
    </location>
</feature>
<feature type="transmembrane region" description="Helical" evidence="1">
    <location>
        <begin position="228"/>
        <end position="248"/>
    </location>
</feature>
<feature type="transmembrane region" description="Helical" evidence="1">
    <location>
        <begin position="255"/>
        <end position="275"/>
    </location>
</feature>
<feature type="transmembrane region" description="Helical" evidence="1">
    <location>
        <begin position="282"/>
        <end position="302"/>
    </location>
</feature>
<feature type="transmembrane region" description="Helical" evidence="1">
    <location>
        <begin position="309"/>
        <end position="329"/>
    </location>
</feature>
<feature type="transmembrane region" description="Helical" evidence="1">
    <location>
        <begin position="351"/>
        <end position="371"/>
    </location>
</feature>
<feature type="transmembrane region" description="Helical" evidence="1">
    <location>
        <begin position="375"/>
        <end position="395"/>
    </location>
</feature>
<keyword id="KW-0997">Cell inner membrane</keyword>
<keyword id="KW-1003">Cell membrane</keyword>
<keyword id="KW-0472">Membrane</keyword>
<keyword id="KW-0812">Transmembrane</keyword>
<keyword id="KW-1133">Transmembrane helix</keyword>
<keyword id="KW-0813">Transport</keyword>
<name>Y3330_PSEA8</name>
<comment type="subcellular location">
    <subcellularLocation>
        <location evidence="1">Cell inner membrane</location>
        <topology evidence="1">Multi-pass membrane protein</topology>
    </subcellularLocation>
</comment>
<comment type="similarity">
    <text evidence="1">Belongs to the major facilitator superfamily. YhhS family.</text>
</comment>
<dbReference type="EMBL" id="FM209186">
    <property type="protein sequence ID" value="CAW28057.1"/>
    <property type="molecule type" value="Genomic_DNA"/>
</dbReference>
<dbReference type="RefSeq" id="WP_003113497.1">
    <property type="nucleotide sequence ID" value="NC_011770.1"/>
</dbReference>
<dbReference type="SMR" id="B7VAB2"/>
<dbReference type="KEGG" id="pag:PLES_33301"/>
<dbReference type="HOGENOM" id="CLU_001265_10_3_6"/>
<dbReference type="GO" id="GO:0005886">
    <property type="term" value="C:plasma membrane"/>
    <property type="evidence" value="ECO:0007669"/>
    <property type="project" value="UniProtKB-SubCell"/>
</dbReference>
<dbReference type="GO" id="GO:0022857">
    <property type="term" value="F:transmembrane transporter activity"/>
    <property type="evidence" value="ECO:0007669"/>
    <property type="project" value="UniProtKB-UniRule"/>
</dbReference>
<dbReference type="CDD" id="cd17489">
    <property type="entry name" value="MFS_YfcJ_like"/>
    <property type="match status" value="1"/>
</dbReference>
<dbReference type="Gene3D" id="1.20.1250.20">
    <property type="entry name" value="MFS general substrate transporter like domains"/>
    <property type="match status" value="1"/>
</dbReference>
<dbReference type="HAMAP" id="MF_01118">
    <property type="entry name" value="MFS_YhhS"/>
    <property type="match status" value="1"/>
</dbReference>
<dbReference type="InterPro" id="IPR011701">
    <property type="entry name" value="MFS"/>
</dbReference>
<dbReference type="InterPro" id="IPR020846">
    <property type="entry name" value="MFS_dom"/>
</dbReference>
<dbReference type="InterPro" id="IPR036259">
    <property type="entry name" value="MFS_trans_sf"/>
</dbReference>
<dbReference type="InterPro" id="IPR050171">
    <property type="entry name" value="MFS_Transporters"/>
</dbReference>
<dbReference type="InterPro" id="IPR023008">
    <property type="entry name" value="MFS_YhhS-like"/>
</dbReference>
<dbReference type="NCBIfam" id="NF003477">
    <property type="entry name" value="PRK05122.1"/>
    <property type="match status" value="1"/>
</dbReference>
<dbReference type="NCBIfam" id="NF009048">
    <property type="entry name" value="PRK12382.1"/>
    <property type="match status" value="1"/>
</dbReference>
<dbReference type="PANTHER" id="PTHR23517:SF13">
    <property type="entry name" value="MAJOR FACILITATOR SUPERFAMILY MFS_1"/>
    <property type="match status" value="1"/>
</dbReference>
<dbReference type="PANTHER" id="PTHR23517">
    <property type="entry name" value="RESISTANCE PROTEIN MDTM, PUTATIVE-RELATED-RELATED"/>
    <property type="match status" value="1"/>
</dbReference>
<dbReference type="Pfam" id="PF07690">
    <property type="entry name" value="MFS_1"/>
    <property type="match status" value="1"/>
</dbReference>
<dbReference type="SUPFAM" id="SSF103473">
    <property type="entry name" value="MFS general substrate transporter"/>
    <property type="match status" value="1"/>
</dbReference>
<dbReference type="PROSITE" id="PS50850">
    <property type="entry name" value="MFS"/>
    <property type="match status" value="1"/>
</dbReference>